<keyword id="KW-0997">Cell inner membrane</keyword>
<keyword id="KW-1003">Cell membrane</keyword>
<keyword id="KW-0472">Membrane</keyword>
<keyword id="KW-0520">NAD</keyword>
<keyword id="KW-0874">Quinone</keyword>
<keyword id="KW-1185">Reference proteome</keyword>
<keyword id="KW-1278">Translocase</keyword>
<keyword id="KW-0813">Transport</keyword>
<keyword id="KW-0830">Ubiquinone</keyword>
<accession>Q82TU5</accession>
<comment type="function">
    <text evidence="1">NDH-1 shuttles electrons from NADH, via FMN and iron-sulfur (Fe-S) centers, to quinones in the respiratory chain. The immediate electron acceptor for the enzyme in this species is believed to be ubiquinone. Couples the redox reaction to proton translocation (for every two electrons transferred, four hydrogen ions are translocated across the cytoplasmic membrane), and thus conserves the redox energy in a proton gradient.</text>
</comment>
<comment type="catalytic activity">
    <reaction evidence="1">
        <text>a quinone + NADH + 5 H(+)(in) = a quinol + NAD(+) + 4 H(+)(out)</text>
        <dbReference type="Rhea" id="RHEA:57888"/>
        <dbReference type="ChEBI" id="CHEBI:15378"/>
        <dbReference type="ChEBI" id="CHEBI:24646"/>
        <dbReference type="ChEBI" id="CHEBI:57540"/>
        <dbReference type="ChEBI" id="CHEBI:57945"/>
        <dbReference type="ChEBI" id="CHEBI:132124"/>
    </reaction>
</comment>
<comment type="subunit">
    <text evidence="1">NDH-1 is composed of 14 different subunits. Subunits NuoB, C, D, E, F, and G constitute the peripheral sector of the complex.</text>
</comment>
<comment type="subcellular location">
    <subcellularLocation>
        <location evidence="1">Cell inner membrane</location>
        <topology evidence="1">Peripheral membrane protein</topology>
        <orientation evidence="1">Cytoplasmic side</orientation>
    </subcellularLocation>
</comment>
<comment type="similarity">
    <text evidence="1">Belongs to the complex I 30 kDa subunit family.</text>
</comment>
<sequence length="206" mass="24181">MTNSRLEKLAADLQRILGDRQIDISCALGELTLLVHSRDLPDIAEVLRDHQDLGFDTLIDLCGVDFSEYSTDTHAGYKREDRRFAVVYHLLSVKHNHRLRVRVFAEDNEFPMVDSVMPVWPSANWFEREAFDLFGIIFNNHPDLRRILTDYGFIGNPFRKDFPLSGHVEMRYDPDQKRVVYQPVTIEPREITPYVIREEQYGREEI</sequence>
<dbReference type="EC" id="7.1.1.-" evidence="1"/>
<dbReference type="EMBL" id="AL954747">
    <property type="protein sequence ID" value="CAD85686.1"/>
    <property type="molecule type" value="Genomic_DNA"/>
</dbReference>
<dbReference type="RefSeq" id="WP_011112326.1">
    <property type="nucleotide sequence ID" value="NC_004757.1"/>
</dbReference>
<dbReference type="SMR" id="Q82TU5"/>
<dbReference type="STRING" id="228410.NE1775"/>
<dbReference type="GeneID" id="87104936"/>
<dbReference type="KEGG" id="neu:NE1775"/>
<dbReference type="eggNOG" id="COG0852">
    <property type="taxonomic scope" value="Bacteria"/>
</dbReference>
<dbReference type="HOGENOM" id="CLU_042628_2_1_4"/>
<dbReference type="OrthoDB" id="9803286at2"/>
<dbReference type="PhylomeDB" id="Q82TU5"/>
<dbReference type="Proteomes" id="UP000001416">
    <property type="component" value="Chromosome"/>
</dbReference>
<dbReference type="GO" id="GO:0005886">
    <property type="term" value="C:plasma membrane"/>
    <property type="evidence" value="ECO:0007669"/>
    <property type="project" value="UniProtKB-SubCell"/>
</dbReference>
<dbReference type="GO" id="GO:0008137">
    <property type="term" value="F:NADH dehydrogenase (ubiquinone) activity"/>
    <property type="evidence" value="ECO:0007669"/>
    <property type="project" value="InterPro"/>
</dbReference>
<dbReference type="GO" id="GO:0050136">
    <property type="term" value="F:NADH:ubiquinone reductase (non-electrogenic) activity"/>
    <property type="evidence" value="ECO:0007669"/>
    <property type="project" value="UniProtKB-UniRule"/>
</dbReference>
<dbReference type="GO" id="GO:0048038">
    <property type="term" value="F:quinone binding"/>
    <property type="evidence" value="ECO:0007669"/>
    <property type="project" value="UniProtKB-KW"/>
</dbReference>
<dbReference type="Gene3D" id="3.30.460.80">
    <property type="entry name" value="NADH:ubiquinone oxidoreductase, 30kDa subunit"/>
    <property type="match status" value="1"/>
</dbReference>
<dbReference type="HAMAP" id="MF_01357">
    <property type="entry name" value="NDH1_NuoC"/>
    <property type="match status" value="1"/>
</dbReference>
<dbReference type="InterPro" id="IPR010218">
    <property type="entry name" value="NADH_DH_suC"/>
</dbReference>
<dbReference type="InterPro" id="IPR037232">
    <property type="entry name" value="NADH_quin_OxRdtase_su_C/D-like"/>
</dbReference>
<dbReference type="InterPro" id="IPR001268">
    <property type="entry name" value="NADH_UbQ_OxRdtase_30kDa_su"/>
</dbReference>
<dbReference type="InterPro" id="IPR020396">
    <property type="entry name" value="NADH_UbQ_OxRdtase_CS"/>
</dbReference>
<dbReference type="NCBIfam" id="TIGR01961">
    <property type="entry name" value="NuoC_fam"/>
    <property type="match status" value="1"/>
</dbReference>
<dbReference type="NCBIfam" id="NF004730">
    <property type="entry name" value="PRK06074.1-1"/>
    <property type="match status" value="1"/>
</dbReference>
<dbReference type="PANTHER" id="PTHR10884:SF14">
    <property type="entry name" value="NADH DEHYDROGENASE [UBIQUINONE] IRON-SULFUR PROTEIN 3, MITOCHONDRIAL"/>
    <property type="match status" value="1"/>
</dbReference>
<dbReference type="PANTHER" id="PTHR10884">
    <property type="entry name" value="NADH DEHYDROGENASE UBIQUINONE IRON-SULFUR PROTEIN 3"/>
    <property type="match status" value="1"/>
</dbReference>
<dbReference type="Pfam" id="PF00329">
    <property type="entry name" value="Complex1_30kDa"/>
    <property type="match status" value="1"/>
</dbReference>
<dbReference type="SUPFAM" id="SSF143243">
    <property type="entry name" value="Nqo5-like"/>
    <property type="match status" value="1"/>
</dbReference>
<dbReference type="PROSITE" id="PS00542">
    <property type="entry name" value="COMPLEX1_30K"/>
    <property type="match status" value="1"/>
</dbReference>
<feature type="chain" id="PRO_0000358150" description="NADH-quinone oxidoreductase subunit C">
    <location>
        <begin position="1"/>
        <end position="206"/>
    </location>
</feature>
<name>NUOC_NITEU</name>
<evidence type="ECO:0000255" key="1">
    <source>
        <dbReference type="HAMAP-Rule" id="MF_01357"/>
    </source>
</evidence>
<organism>
    <name type="scientific">Nitrosomonas europaea (strain ATCC 19718 / CIP 103999 / KCTC 2705 / NBRC 14298)</name>
    <dbReference type="NCBI Taxonomy" id="228410"/>
    <lineage>
        <taxon>Bacteria</taxon>
        <taxon>Pseudomonadati</taxon>
        <taxon>Pseudomonadota</taxon>
        <taxon>Betaproteobacteria</taxon>
        <taxon>Nitrosomonadales</taxon>
        <taxon>Nitrosomonadaceae</taxon>
        <taxon>Nitrosomonas</taxon>
    </lineage>
</organism>
<gene>
    <name evidence="1" type="primary">nuoC</name>
    <name type="ordered locus">NE1775</name>
</gene>
<protein>
    <recommendedName>
        <fullName evidence="1">NADH-quinone oxidoreductase subunit C</fullName>
        <ecNumber evidence="1">7.1.1.-</ecNumber>
    </recommendedName>
    <alternativeName>
        <fullName evidence="1">NADH dehydrogenase I subunit C</fullName>
    </alternativeName>
    <alternativeName>
        <fullName evidence="1">NDH-1 subunit C</fullName>
    </alternativeName>
</protein>
<reference key="1">
    <citation type="journal article" date="2003" name="J. Bacteriol.">
        <title>Complete genome sequence of the ammonia-oxidizing bacterium and obligate chemolithoautotroph Nitrosomonas europaea.</title>
        <authorList>
            <person name="Chain P."/>
            <person name="Lamerdin J.E."/>
            <person name="Larimer F.W."/>
            <person name="Regala W."/>
            <person name="Lao V."/>
            <person name="Land M.L."/>
            <person name="Hauser L."/>
            <person name="Hooper A.B."/>
            <person name="Klotz M.G."/>
            <person name="Norton J."/>
            <person name="Sayavedra-Soto L.A."/>
            <person name="Arciero D.M."/>
            <person name="Hommes N.G."/>
            <person name="Whittaker M.M."/>
            <person name="Arp D.J."/>
        </authorList>
    </citation>
    <scope>NUCLEOTIDE SEQUENCE [LARGE SCALE GENOMIC DNA]</scope>
    <source>
        <strain>ATCC 19718 / CIP 103999 / KCTC 2705 / NBRC 14298</strain>
    </source>
</reference>
<proteinExistence type="inferred from homology"/>